<feature type="signal peptide" evidence="2">
    <location>
        <begin position="1"/>
        <end position="29"/>
    </location>
</feature>
<feature type="chain" id="PRO_0000008708" description="Putative expansin-B2">
    <location>
        <begin position="30"/>
        <end position="273"/>
    </location>
</feature>
<feature type="domain" description="Expansin-like EG45" evidence="4">
    <location>
        <begin position="65"/>
        <end position="173"/>
    </location>
</feature>
<feature type="domain" description="Expansin-like CBD" evidence="3">
    <location>
        <begin position="186"/>
        <end position="269"/>
    </location>
</feature>
<feature type="glycosylation site" description="N-linked (GlcNAc...) asparagine" evidence="2">
    <location>
        <position position="36"/>
    </location>
</feature>
<feature type="disulfide bond" evidence="4">
    <location>
        <begin position="68"/>
        <end position="97"/>
    </location>
</feature>
<feature type="disulfide bond" evidence="4">
    <location>
        <begin position="100"/>
        <end position="168"/>
    </location>
</feature>
<feature type="disulfide bond" evidence="4">
    <location>
        <begin position="105"/>
        <end position="111"/>
    </location>
</feature>
<protein>
    <recommendedName>
        <fullName>Putative expansin-B2</fullName>
        <shortName>At-EXPB2</shortName>
        <shortName>AtEXPB2</shortName>
    </recommendedName>
    <alternativeName>
        <fullName>Ath-ExpBeta-1.4</fullName>
    </alternativeName>
    <alternativeName>
        <fullName>Beta-expansin-2</fullName>
    </alternativeName>
</protein>
<accession>Q9SHY6</accession>
<accession>O04484</accession>
<name>EXPB2_ARATH</name>
<dbReference type="EMBL" id="AC001229">
    <property type="protein sequence ID" value="AAB60916.1"/>
    <property type="status" value="ALT_SEQ"/>
    <property type="molecule type" value="Genomic_DNA"/>
</dbReference>
<dbReference type="EMBL" id="AC007234">
    <property type="protein sequence ID" value="AAF23829.1"/>
    <property type="status" value="ALT_SEQ"/>
    <property type="molecule type" value="Genomic_DNA"/>
</dbReference>
<dbReference type="EMBL" id="CP002684">
    <property type="protein sequence ID" value="AEE34410.1"/>
    <property type="molecule type" value="Genomic_DNA"/>
</dbReference>
<dbReference type="PIR" id="F96681">
    <property type="entry name" value="F96681"/>
</dbReference>
<dbReference type="RefSeq" id="NP_564860.3">
    <property type="nucleotide sequence ID" value="NM_105241.4"/>
</dbReference>
<dbReference type="SMR" id="Q9SHY6"/>
<dbReference type="STRING" id="3702.Q9SHY6"/>
<dbReference type="GlyCosmos" id="Q9SHY6">
    <property type="glycosylation" value="1 site, No reported glycans"/>
</dbReference>
<dbReference type="GlyGen" id="Q9SHY6">
    <property type="glycosylation" value="1 site"/>
</dbReference>
<dbReference type="iPTMnet" id="Q9SHY6"/>
<dbReference type="PaxDb" id="3702-AT1G65680.1"/>
<dbReference type="ProteomicsDB" id="222309"/>
<dbReference type="EnsemblPlants" id="AT1G65680.1">
    <property type="protein sequence ID" value="AT1G65680.1"/>
    <property type="gene ID" value="AT1G65680"/>
</dbReference>
<dbReference type="GeneID" id="842879"/>
<dbReference type="Gramene" id="AT1G65680.1">
    <property type="protein sequence ID" value="AT1G65680.1"/>
    <property type="gene ID" value="AT1G65680"/>
</dbReference>
<dbReference type="KEGG" id="ath:AT1G65680"/>
<dbReference type="Araport" id="AT1G65680"/>
<dbReference type="TAIR" id="AT1G65680">
    <property type="gene designation" value="EXPB2"/>
</dbReference>
<dbReference type="eggNOG" id="ENOG502QRTE">
    <property type="taxonomic scope" value="Eukaryota"/>
</dbReference>
<dbReference type="HOGENOM" id="CLU_027462_1_2_1"/>
<dbReference type="InParanoid" id="Q9SHY6"/>
<dbReference type="OMA" id="VLERCHI"/>
<dbReference type="PhylomeDB" id="Q9SHY6"/>
<dbReference type="PRO" id="PR:Q9SHY6"/>
<dbReference type="Proteomes" id="UP000006548">
    <property type="component" value="Chromosome 1"/>
</dbReference>
<dbReference type="ExpressionAtlas" id="Q9SHY6">
    <property type="expression patterns" value="baseline and differential"/>
</dbReference>
<dbReference type="GO" id="GO:0005576">
    <property type="term" value="C:extracellular region"/>
    <property type="evidence" value="ECO:0007669"/>
    <property type="project" value="UniProtKB-KW"/>
</dbReference>
<dbReference type="GO" id="GO:0016020">
    <property type="term" value="C:membrane"/>
    <property type="evidence" value="ECO:0007669"/>
    <property type="project" value="UniProtKB-SubCell"/>
</dbReference>
<dbReference type="GO" id="GO:0009828">
    <property type="term" value="P:plant-type cell wall loosening"/>
    <property type="evidence" value="ECO:0000250"/>
    <property type="project" value="UniProtKB"/>
</dbReference>
<dbReference type="GO" id="GO:0019953">
    <property type="term" value="P:sexual reproduction"/>
    <property type="evidence" value="ECO:0007669"/>
    <property type="project" value="InterPro"/>
</dbReference>
<dbReference type="GO" id="GO:0009826">
    <property type="term" value="P:unidimensional cell growth"/>
    <property type="evidence" value="ECO:0000303"/>
    <property type="project" value="TAIR"/>
</dbReference>
<dbReference type="CDD" id="cd22275">
    <property type="entry name" value="DPBB_EXPB_N"/>
    <property type="match status" value="1"/>
</dbReference>
<dbReference type="Gene3D" id="2.60.40.760">
    <property type="entry name" value="Expansin, cellulose-binding-like domain"/>
    <property type="match status" value="1"/>
</dbReference>
<dbReference type="Gene3D" id="2.40.40.10">
    <property type="entry name" value="RlpA-like domain"/>
    <property type="match status" value="1"/>
</dbReference>
<dbReference type="InterPro" id="IPR007118">
    <property type="entry name" value="Expan_Lol_pI"/>
</dbReference>
<dbReference type="InterPro" id="IPR007112">
    <property type="entry name" value="Expansin/allergen_DPBB_dom"/>
</dbReference>
<dbReference type="InterPro" id="IPR007117">
    <property type="entry name" value="Expansin_CBD"/>
</dbReference>
<dbReference type="InterPro" id="IPR036749">
    <property type="entry name" value="Expansin_CBD_sf"/>
</dbReference>
<dbReference type="InterPro" id="IPR005795">
    <property type="entry name" value="LolPI"/>
</dbReference>
<dbReference type="InterPro" id="IPR009009">
    <property type="entry name" value="RlpA-like_DPBB"/>
</dbReference>
<dbReference type="InterPro" id="IPR036908">
    <property type="entry name" value="RlpA-like_sf"/>
</dbReference>
<dbReference type="PANTHER" id="PTHR31692:SF56">
    <property type="entry name" value="EXPANSIN-B2-RELATED"/>
    <property type="match status" value="1"/>
</dbReference>
<dbReference type="PANTHER" id="PTHR31692">
    <property type="entry name" value="EXPANSIN-B3"/>
    <property type="match status" value="1"/>
</dbReference>
<dbReference type="Pfam" id="PF03330">
    <property type="entry name" value="DPBB_1"/>
    <property type="match status" value="1"/>
</dbReference>
<dbReference type="Pfam" id="PF01357">
    <property type="entry name" value="Expansin_C"/>
    <property type="match status" value="1"/>
</dbReference>
<dbReference type="PRINTS" id="PR01225">
    <property type="entry name" value="EXPANSNFAMLY"/>
</dbReference>
<dbReference type="PRINTS" id="PR00829">
    <property type="entry name" value="LOLP1ALLERGN"/>
</dbReference>
<dbReference type="SMART" id="SM00837">
    <property type="entry name" value="DPBB_1"/>
    <property type="match status" value="1"/>
</dbReference>
<dbReference type="SUPFAM" id="SSF50685">
    <property type="entry name" value="Barwin-like endoglucanases"/>
    <property type="match status" value="1"/>
</dbReference>
<dbReference type="SUPFAM" id="SSF49590">
    <property type="entry name" value="PHL pollen allergen"/>
    <property type="match status" value="1"/>
</dbReference>
<dbReference type="PROSITE" id="PS50843">
    <property type="entry name" value="EXPANSIN_CBD"/>
    <property type="match status" value="1"/>
</dbReference>
<dbReference type="PROSITE" id="PS50842">
    <property type="entry name" value="EXPANSIN_EG45"/>
    <property type="match status" value="1"/>
</dbReference>
<sequence>MTILVVDRYYMLMNLLFALTCLLLNLTHCFSPKKFNISAATTSDSDWSIAGSTWYGNPTGYGSDGGACGYGNAVAQPPFSKMVSAGGPSLFKSGKGCGACYQVKCTSKSACSKNPVTVVITDECPGCVKESVHFDLSGTAFGAMAISGQDSQLRNVGELQILYKKVECNYIGKTVTFQVDKGSNANSFAVLVAYVNGDGEIGRIELKQALDSDKWLSMSQSWGAVWKLDVSSPLRAPLSLRVTSLESGKTVVASNVIPANWQPGAIYKSNVNF</sequence>
<organism>
    <name type="scientific">Arabidopsis thaliana</name>
    <name type="common">Mouse-ear cress</name>
    <dbReference type="NCBI Taxonomy" id="3702"/>
    <lineage>
        <taxon>Eukaryota</taxon>
        <taxon>Viridiplantae</taxon>
        <taxon>Streptophyta</taxon>
        <taxon>Embryophyta</taxon>
        <taxon>Tracheophyta</taxon>
        <taxon>Spermatophyta</taxon>
        <taxon>Magnoliopsida</taxon>
        <taxon>eudicotyledons</taxon>
        <taxon>Gunneridae</taxon>
        <taxon>Pentapetalae</taxon>
        <taxon>rosids</taxon>
        <taxon>malvids</taxon>
        <taxon>Brassicales</taxon>
        <taxon>Brassicaceae</taxon>
        <taxon>Camelineae</taxon>
        <taxon>Arabidopsis</taxon>
    </lineage>
</organism>
<comment type="function">
    <text evidence="1">May cause loosening and extension of plant cell walls by disrupting non-covalent bonding between cellulose microfibrils and matrix glucans. No enzymatic activity has been found (By similarity).</text>
</comment>
<comment type="subcellular location">
    <subcellularLocation>
        <location>Secreted</location>
        <location>Cell wall</location>
    </subcellularLocation>
    <subcellularLocation>
        <location>Membrane</location>
        <topology>Peripheral membrane protein</topology>
    </subcellularLocation>
</comment>
<comment type="similarity">
    <text evidence="5">Belongs to the expansin family. Expansin B subfamily.</text>
</comment>
<comment type="sequence caution" evidence="5">
    <conflict type="erroneous gene model prediction">
        <sequence resource="EMBL-CDS" id="AAB60916"/>
    </conflict>
</comment>
<comment type="sequence caution" evidence="5">
    <conflict type="erroneous gene model prediction">
        <sequence resource="EMBL-CDS" id="AAF23829"/>
    </conflict>
</comment>
<comment type="online information" name="EXPANSIN homepage">
    <link uri="https://www.dept.psu.edu/biology/groups/expansins/index.htm"/>
</comment>
<proteinExistence type="inferred from homology"/>
<reference key="1">
    <citation type="journal article" date="2000" name="Nature">
        <title>Sequence and analysis of chromosome 1 of the plant Arabidopsis thaliana.</title>
        <authorList>
            <person name="Theologis A."/>
            <person name="Ecker J.R."/>
            <person name="Palm C.J."/>
            <person name="Federspiel N.A."/>
            <person name="Kaul S."/>
            <person name="White O."/>
            <person name="Alonso J."/>
            <person name="Altafi H."/>
            <person name="Araujo R."/>
            <person name="Bowman C.L."/>
            <person name="Brooks S.Y."/>
            <person name="Buehler E."/>
            <person name="Chan A."/>
            <person name="Chao Q."/>
            <person name="Chen H."/>
            <person name="Cheuk R.F."/>
            <person name="Chin C.W."/>
            <person name="Chung M.K."/>
            <person name="Conn L."/>
            <person name="Conway A.B."/>
            <person name="Conway A.R."/>
            <person name="Creasy T.H."/>
            <person name="Dewar K."/>
            <person name="Dunn P."/>
            <person name="Etgu P."/>
            <person name="Feldblyum T.V."/>
            <person name="Feng J.-D."/>
            <person name="Fong B."/>
            <person name="Fujii C.Y."/>
            <person name="Gill J.E."/>
            <person name="Goldsmith A.D."/>
            <person name="Haas B."/>
            <person name="Hansen N.F."/>
            <person name="Hughes B."/>
            <person name="Huizar L."/>
            <person name="Hunter J.L."/>
            <person name="Jenkins J."/>
            <person name="Johnson-Hopson C."/>
            <person name="Khan S."/>
            <person name="Khaykin E."/>
            <person name="Kim C.J."/>
            <person name="Koo H.L."/>
            <person name="Kremenetskaia I."/>
            <person name="Kurtz D.B."/>
            <person name="Kwan A."/>
            <person name="Lam B."/>
            <person name="Langin-Hooper S."/>
            <person name="Lee A."/>
            <person name="Lee J.M."/>
            <person name="Lenz C.A."/>
            <person name="Li J.H."/>
            <person name="Li Y.-P."/>
            <person name="Lin X."/>
            <person name="Liu S.X."/>
            <person name="Liu Z.A."/>
            <person name="Luros J.S."/>
            <person name="Maiti R."/>
            <person name="Marziali A."/>
            <person name="Militscher J."/>
            <person name="Miranda M."/>
            <person name="Nguyen M."/>
            <person name="Nierman W.C."/>
            <person name="Osborne B.I."/>
            <person name="Pai G."/>
            <person name="Peterson J."/>
            <person name="Pham P.K."/>
            <person name="Rizzo M."/>
            <person name="Rooney T."/>
            <person name="Rowley D."/>
            <person name="Sakano H."/>
            <person name="Salzberg S.L."/>
            <person name="Schwartz J.R."/>
            <person name="Shinn P."/>
            <person name="Southwick A.M."/>
            <person name="Sun H."/>
            <person name="Tallon L.J."/>
            <person name="Tambunga G."/>
            <person name="Toriumi M.J."/>
            <person name="Town C.D."/>
            <person name="Utterback T."/>
            <person name="Van Aken S."/>
            <person name="Vaysberg M."/>
            <person name="Vysotskaia V.S."/>
            <person name="Walker M."/>
            <person name="Wu D."/>
            <person name="Yu G."/>
            <person name="Fraser C.M."/>
            <person name="Venter J.C."/>
            <person name="Davis R.W."/>
        </authorList>
    </citation>
    <scope>NUCLEOTIDE SEQUENCE [LARGE SCALE GENOMIC DNA]</scope>
    <source>
        <strain>cv. Columbia</strain>
    </source>
</reference>
<reference key="2">
    <citation type="journal article" date="2017" name="Plant J.">
        <title>Araport11: a complete reannotation of the Arabidopsis thaliana reference genome.</title>
        <authorList>
            <person name="Cheng C.Y."/>
            <person name="Krishnakumar V."/>
            <person name="Chan A.P."/>
            <person name="Thibaud-Nissen F."/>
            <person name="Schobel S."/>
            <person name="Town C.D."/>
        </authorList>
    </citation>
    <scope>GENOME REANNOTATION</scope>
    <source>
        <strain>cv. Columbia</strain>
    </source>
</reference>
<reference key="3">
    <citation type="journal article" date="2004" name="Plant Mol. Biol.">
        <title>Nomenclature for members of the expansin superfamily of genes and proteins.</title>
        <authorList>
            <person name="Kende H."/>
            <person name="Bradford K.J."/>
            <person name="Brummell D.A."/>
            <person name="Cho H.-T."/>
            <person name="Cosgrove D.J."/>
            <person name="Fleming A.J."/>
            <person name="Gehring C."/>
            <person name="Lee Y."/>
            <person name="McQueen-Mason S.J."/>
            <person name="Rose J.K.C."/>
            <person name="Voesenek L.A.C."/>
        </authorList>
    </citation>
    <scope>NOMENCLATURE</scope>
</reference>
<gene>
    <name type="primary">EXPB2</name>
    <name type="ordered locus">At1g65680</name>
    <name type="ORF">F1E22.6</name>
    <name type="ORF">F1E22_12</name>
    <name type="ORF">F5I14.1</name>
</gene>
<evidence type="ECO:0000250" key="1"/>
<evidence type="ECO:0000255" key="2"/>
<evidence type="ECO:0000255" key="3">
    <source>
        <dbReference type="PROSITE-ProRule" id="PRU00078"/>
    </source>
</evidence>
<evidence type="ECO:0000255" key="4">
    <source>
        <dbReference type="PROSITE-ProRule" id="PRU00079"/>
    </source>
</evidence>
<evidence type="ECO:0000305" key="5"/>
<keyword id="KW-0134">Cell wall</keyword>
<keyword id="KW-0961">Cell wall biogenesis/degradation</keyword>
<keyword id="KW-1015">Disulfide bond</keyword>
<keyword id="KW-0325">Glycoprotein</keyword>
<keyword id="KW-0472">Membrane</keyword>
<keyword id="KW-1185">Reference proteome</keyword>
<keyword id="KW-0964">Secreted</keyword>
<keyword id="KW-0732">Signal</keyword>